<comment type="function">
    <text evidence="1">Catalyzes the methyl esterification of L-isoaspartyl residues in peptides and proteins that result from spontaneous decomposition of normal L-aspartyl and L-asparaginyl residues. It plays a role in the repair and/or degradation of damaged proteins.</text>
</comment>
<comment type="catalytic activity">
    <reaction evidence="1">
        <text>[protein]-L-isoaspartate + S-adenosyl-L-methionine = [protein]-L-isoaspartate alpha-methyl ester + S-adenosyl-L-homocysteine</text>
        <dbReference type="Rhea" id="RHEA:12705"/>
        <dbReference type="Rhea" id="RHEA-COMP:12143"/>
        <dbReference type="Rhea" id="RHEA-COMP:12144"/>
        <dbReference type="ChEBI" id="CHEBI:57856"/>
        <dbReference type="ChEBI" id="CHEBI:59789"/>
        <dbReference type="ChEBI" id="CHEBI:90596"/>
        <dbReference type="ChEBI" id="CHEBI:90598"/>
        <dbReference type="EC" id="2.1.1.77"/>
    </reaction>
</comment>
<comment type="subcellular location">
    <subcellularLocation>
        <location evidence="1">Cytoplasm</location>
    </subcellularLocation>
</comment>
<comment type="similarity">
    <text evidence="1">Belongs to the methyltransferase superfamily. L-isoaspartyl/D-aspartyl protein methyltransferase family.</text>
</comment>
<evidence type="ECO:0000255" key="1">
    <source>
        <dbReference type="HAMAP-Rule" id="MF_00090"/>
    </source>
</evidence>
<proteinExistence type="inferred from homology"/>
<feature type="chain" id="PRO_1000093283" description="Protein-L-isoaspartate O-methyltransferase">
    <location>
        <begin position="1"/>
        <end position="211"/>
    </location>
</feature>
<feature type="active site" evidence="1">
    <location>
        <position position="62"/>
    </location>
</feature>
<accession>Q12PY8</accession>
<dbReference type="EC" id="2.1.1.77" evidence="1"/>
<dbReference type="EMBL" id="CP000302">
    <property type="protein sequence ID" value="ABE54488.1"/>
    <property type="molecule type" value="Genomic_DNA"/>
</dbReference>
<dbReference type="RefSeq" id="WP_011495648.1">
    <property type="nucleotide sequence ID" value="NC_007954.1"/>
</dbReference>
<dbReference type="SMR" id="Q12PY8"/>
<dbReference type="STRING" id="318161.Sden_1202"/>
<dbReference type="KEGG" id="sdn:Sden_1202"/>
<dbReference type="eggNOG" id="COG2518">
    <property type="taxonomic scope" value="Bacteria"/>
</dbReference>
<dbReference type="HOGENOM" id="CLU_055432_2_0_6"/>
<dbReference type="OrthoDB" id="9810066at2"/>
<dbReference type="Proteomes" id="UP000001982">
    <property type="component" value="Chromosome"/>
</dbReference>
<dbReference type="GO" id="GO:0005737">
    <property type="term" value="C:cytoplasm"/>
    <property type="evidence" value="ECO:0007669"/>
    <property type="project" value="UniProtKB-SubCell"/>
</dbReference>
<dbReference type="GO" id="GO:0004719">
    <property type="term" value="F:protein-L-isoaspartate (D-aspartate) O-methyltransferase activity"/>
    <property type="evidence" value="ECO:0007669"/>
    <property type="project" value="UniProtKB-UniRule"/>
</dbReference>
<dbReference type="GO" id="GO:0032259">
    <property type="term" value="P:methylation"/>
    <property type="evidence" value="ECO:0007669"/>
    <property type="project" value="UniProtKB-KW"/>
</dbReference>
<dbReference type="GO" id="GO:0036211">
    <property type="term" value="P:protein modification process"/>
    <property type="evidence" value="ECO:0007669"/>
    <property type="project" value="UniProtKB-UniRule"/>
</dbReference>
<dbReference type="GO" id="GO:0030091">
    <property type="term" value="P:protein repair"/>
    <property type="evidence" value="ECO:0007669"/>
    <property type="project" value="UniProtKB-UniRule"/>
</dbReference>
<dbReference type="CDD" id="cd02440">
    <property type="entry name" value="AdoMet_MTases"/>
    <property type="match status" value="1"/>
</dbReference>
<dbReference type="FunFam" id="3.40.50.150:FF:000010">
    <property type="entry name" value="Protein-L-isoaspartate O-methyltransferase"/>
    <property type="match status" value="1"/>
</dbReference>
<dbReference type="Gene3D" id="3.40.50.150">
    <property type="entry name" value="Vaccinia Virus protein VP39"/>
    <property type="match status" value="1"/>
</dbReference>
<dbReference type="HAMAP" id="MF_00090">
    <property type="entry name" value="PIMT"/>
    <property type="match status" value="1"/>
</dbReference>
<dbReference type="InterPro" id="IPR000682">
    <property type="entry name" value="PCMT"/>
</dbReference>
<dbReference type="InterPro" id="IPR029063">
    <property type="entry name" value="SAM-dependent_MTases_sf"/>
</dbReference>
<dbReference type="NCBIfam" id="TIGR00080">
    <property type="entry name" value="pimt"/>
    <property type="match status" value="1"/>
</dbReference>
<dbReference type="NCBIfam" id="NF001453">
    <property type="entry name" value="PRK00312.1"/>
    <property type="match status" value="1"/>
</dbReference>
<dbReference type="PANTHER" id="PTHR11579">
    <property type="entry name" value="PROTEIN-L-ISOASPARTATE O-METHYLTRANSFERASE"/>
    <property type="match status" value="1"/>
</dbReference>
<dbReference type="PANTHER" id="PTHR11579:SF0">
    <property type="entry name" value="PROTEIN-L-ISOASPARTATE(D-ASPARTATE) O-METHYLTRANSFERASE"/>
    <property type="match status" value="1"/>
</dbReference>
<dbReference type="Pfam" id="PF01135">
    <property type="entry name" value="PCMT"/>
    <property type="match status" value="1"/>
</dbReference>
<dbReference type="SUPFAM" id="SSF53335">
    <property type="entry name" value="S-adenosyl-L-methionine-dependent methyltransferases"/>
    <property type="match status" value="1"/>
</dbReference>
<dbReference type="PROSITE" id="PS01279">
    <property type="entry name" value="PCMT"/>
    <property type="match status" value="1"/>
</dbReference>
<gene>
    <name evidence="1" type="primary">pcm</name>
    <name type="ordered locus">Sden_1202</name>
</gene>
<sequence>MTAAASTLALNLARKLYETGIRSQSVLSAVANTPRELFLDNALAHKAYENTALPIGQGQTISQPYIVARMTELLLQTQPNKVLEIGTGSGYQAAILAQLVPQLCTIERIKALQIQARQRLKRLDLHNVSFKYGDGWQGWHNKGPFDGILVTAAASKVPEALLAQLSDGGVLLIPVGEDAQQLLKITRTGQSFESQIIEAVKFVPLINGELA</sequence>
<name>PIMT_SHEDO</name>
<protein>
    <recommendedName>
        <fullName evidence="1">Protein-L-isoaspartate O-methyltransferase</fullName>
        <ecNumber evidence="1">2.1.1.77</ecNumber>
    </recommendedName>
    <alternativeName>
        <fullName evidence="1">L-isoaspartyl protein carboxyl methyltransferase</fullName>
    </alternativeName>
    <alternativeName>
        <fullName evidence="1">Protein L-isoaspartyl methyltransferase</fullName>
    </alternativeName>
    <alternativeName>
        <fullName evidence="1">Protein-beta-aspartate methyltransferase</fullName>
        <shortName evidence="1">PIMT</shortName>
    </alternativeName>
</protein>
<organism>
    <name type="scientific">Shewanella denitrificans (strain OS217 / ATCC BAA-1090 / DSM 15013)</name>
    <dbReference type="NCBI Taxonomy" id="318161"/>
    <lineage>
        <taxon>Bacteria</taxon>
        <taxon>Pseudomonadati</taxon>
        <taxon>Pseudomonadota</taxon>
        <taxon>Gammaproteobacteria</taxon>
        <taxon>Alteromonadales</taxon>
        <taxon>Shewanellaceae</taxon>
        <taxon>Shewanella</taxon>
    </lineage>
</organism>
<reference key="1">
    <citation type="submission" date="2006-03" db="EMBL/GenBank/DDBJ databases">
        <title>Complete sequence of Shewanella denitrificans OS217.</title>
        <authorList>
            <consortium name="US DOE Joint Genome Institute"/>
            <person name="Copeland A."/>
            <person name="Lucas S."/>
            <person name="Lapidus A."/>
            <person name="Barry K."/>
            <person name="Detter J.C."/>
            <person name="Glavina del Rio T."/>
            <person name="Hammon N."/>
            <person name="Israni S."/>
            <person name="Dalin E."/>
            <person name="Tice H."/>
            <person name="Pitluck S."/>
            <person name="Brettin T."/>
            <person name="Bruce D."/>
            <person name="Han C."/>
            <person name="Tapia R."/>
            <person name="Gilna P."/>
            <person name="Kiss H."/>
            <person name="Schmutz J."/>
            <person name="Larimer F."/>
            <person name="Land M."/>
            <person name="Hauser L."/>
            <person name="Kyrpides N."/>
            <person name="Lykidis A."/>
            <person name="Richardson P."/>
        </authorList>
    </citation>
    <scope>NUCLEOTIDE SEQUENCE [LARGE SCALE GENOMIC DNA]</scope>
    <source>
        <strain>OS217 / ATCC BAA-1090 / DSM 15013</strain>
    </source>
</reference>
<keyword id="KW-0963">Cytoplasm</keyword>
<keyword id="KW-0489">Methyltransferase</keyword>
<keyword id="KW-1185">Reference proteome</keyword>
<keyword id="KW-0949">S-adenosyl-L-methionine</keyword>
<keyword id="KW-0808">Transferase</keyword>